<keyword id="KW-0963">Cytoplasm</keyword>
<keyword id="KW-0274">FAD</keyword>
<keyword id="KW-0285">Flavoprotein</keyword>
<keyword id="KW-0489">Methyltransferase</keyword>
<keyword id="KW-0520">NAD</keyword>
<keyword id="KW-0521">NADP</keyword>
<keyword id="KW-0808">Transferase</keyword>
<keyword id="KW-0819">tRNA processing</keyword>
<comment type="function">
    <text evidence="1">Catalyzes the folate-dependent formation of 5-methyl-uridine at position 54 (M-5-U54) in all tRNAs.</text>
</comment>
<comment type="catalytic activity">
    <reaction evidence="1">
        <text>uridine(54) in tRNA + (6R)-5,10-methylene-5,6,7,8-tetrahydrofolate + NADH + H(+) = 5-methyluridine(54) in tRNA + (6S)-5,6,7,8-tetrahydrofolate + NAD(+)</text>
        <dbReference type="Rhea" id="RHEA:16873"/>
        <dbReference type="Rhea" id="RHEA-COMP:10167"/>
        <dbReference type="Rhea" id="RHEA-COMP:10193"/>
        <dbReference type="ChEBI" id="CHEBI:15378"/>
        <dbReference type="ChEBI" id="CHEBI:15636"/>
        <dbReference type="ChEBI" id="CHEBI:57453"/>
        <dbReference type="ChEBI" id="CHEBI:57540"/>
        <dbReference type="ChEBI" id="CHEBI:57945"/>
        <dbReference type="ChEBI" id="CHEBI:65315"/>
        <dbReference type="ChEBI" id="CHEBI:74447"/>
        <dbReference type="EC" id="2.1.1.74"/>
    </reaction>
</comment>
<comment type="catalytic activity">
    <reaction evidence="1">
        <text>uridine(54) in tRNA + (6R)-5,10-methylene-5,6,7,8-tetrahydrofolate + NADPH + H(+) = 5-methyluridine(54) in tRNA + (6S)-5,6,7,8-tetrahydrofolate + NADP(+)</text>
        <dbReference type="Rhea" id="RHEA:62372"/>
        <dbReference type="Rhea" id="RHEA-COMP:10167"/>
        <dbReference type="Rhea" id="RHEA-COMP:10193"/>
        <dbReference type="ChEBI" id="CHEBI:15378"/>
        <dbReference type="ChEBI" id="CHEBI:15636"/>
        <dbReference type="ChEBI" id="CHEBI:57453"/>
        <dbReference type="ChEBI" id="CHEBI:57783"/>
        <dbReference type="ChEBI" id="CHEBI:58349"/>
        <dbReference type="ChEBI" id="CHEBI:65315"/>
        <dbReference type="ChEBI" id="CHEBI:74447"/>
        <dbReference type="EC" id="2.1.1.74"/>
    </reaction>
</comment>
<comment type="cofactor">
    <cofactor evidence="1">
        <name>FAD</name>
        <dbReference type="ChEBI" id="CHEBI:57692"/>
    </cofactor>
</comment>
<comment type="subcellular location">
    <subcellularLocation>
        <location evidence="1">Cytoplasm</location>
    </subcellularLocation>
</comment>
<comment type="similarity">
    <text evidence="1">Belongs to the MnmG family. TrmFO subfamily.</text>
</comment>
<gene>
    <name evidence="1" type="primary">trmFO</name>
    <name type="synonym">gid</name>
    <name type="ordered locus">USA300HOU_1182</name>
</gene>
<sequence length="435" mass="48371">MTQTVNVIGAGLAGSEAAYQLAERGIKVNLIEMRPVKQTPAHHTDKFAELVCSNSLRGNALTNGVGVLKEEMRRLNSIIIEAADKARVPAGGALAVDRHDFSGYITETLKNHENITVINEEINAIPDGYTIIATGPLTTETLAQEIVDITGKDQLYFYDAAAPIIEKESIDMDKVYLKSRYDKGEAAYLNCPMTEDEFNRFYDAVLEAEVAPVNSFEKEKYFEGCMPFEVMAERGRKTLLFGPMKPVGLEDPKTGKRPYAVVQLRQDDAAGTLYNIVGFQTHLKWGAQKEVIKLIPGLENVDIVRYGVMHRNTFINSPDVLNEKYELISQPNIQFAGQMTGVEGYVESAASGLVAGINLAHKILGKGEVVFPRETMIGSMAYYISHAKNNKNFQPMNANFGLLPSLETRIKDKKERYEAQANRALDYLENFKKTL</sequence>
<proteinExistence type="inferred from homology"/>
<accession>A8Z3T1</accession>
<evidence type="ECO:0000255" key="1">
    <source>
        <dbReference type="HAMAP-Rule" id="MF_01037"/>
    </source>
</evidence>
<dbReference type="EC" id="2.1.1.74" evidence="1"/>
<dbReference type="EMBL" id="CP000730">
    <property type="protein sequence ID" value="ABX29197.1"/>
    <property type="molecule type" value="Genomic_DNA"/>
</dbReference>
<dbReference type="RefSeq" id="WP_000195254.1">
    <property type="nucleotide sequence ID" value="NC_010079.1"/>
</dbReference>
<dbReference type="SMR" id="A8Z3T1"/>
<dbReference type="KEGG" id="sax:USA300HOU_1182"/>
<dbReference type="HOGENOM" id="CLU_033057_1_0_9"/>
<dbReference type="GO" id="GO:0005829">
    <property type="term" value="C:cytosol"/>
    <property type="evidence" value="ECO:0007669"/>
    <property type="project" value="TreeGrafter"/>
</dbReference>
<dbReference type="GO" id="GO:0050660">
    <property type="term" value="F:flavin adenine dinucleotide binding"/>
    <property type="evidence" value="ECO:0007669"/>
    <property type="project" value="UniProtKB-UniRule"/>
</dbReference>
<dbReference type="GO" id="GO:0047151">
    <property type="term" value="F:tRNA (uracil(54)-C5)-methyltransferase activity, 5,10-methylenetetrahydrofolate-dependent"/>
    <property type="evidence" value="ECO:0007669"/>
    <property type="project" value="UniProtKB-UniRule"/>
</dbReference>
<dbReference type="GO" id="GO:0030488">
    <property type="term" value="P:tRNA methylation"/>
    <property type="evidence" value="ECO:0007669"/>
    <property type="project" value="TreeGrafter"/>
</dbReference>
<dbReference type="GO" id="GO:0002098">
    <property type="term" value="P:tRNA wobble uridine modification"/>
    <property type="evidence" value="ECO:0007669"/>
    <property type="project" value="TreeGrafter"/>
</dbReference>
<dbReference type="FunFam" id="3.50.50.60:FF:000035">
    <property type="entry name" value="Methylenetetrahydrofolate--tRNA-(uracil-5-)-methyltransferase TrmFO"/>
    <property type="match status" value="1"/>
</dbReference>
<dbReference type="FunFam" id="3.50.50.60:FF:000040">
    <property type="entry name" value="Methylenetetrahydrofolate--tRNA-(uracil-5-)-methyltransferase TrmFO"/>
    <property type="match status" value="1"/>
</dbReference>
<dbReference type="Gene3D" id="3.50.50.60">
    <property type="entry name" value="FAD/NAD(P)-binding domain"/>
    <property type="match status" value="2"/>
</dbReference>
<dbReference type="HAMAP" id="MF_01037">
    <property type="entry name" value="TrmFO"/>
    <property type="match status" value="1"/>
</dbReference>
<dbReference type="InterPro" id="IPR036188">
    <property type="entry name" value="FAD/NAD-bd_sf"/>
</dbReference>
<dbReference type="InterPro" id="IPR002218">
    <property type="entry name" value="MnmG-rel"/>
</dbReference>
<dbReference type="InterPro" id="IPR020595">
    <property type="entry name" value="MnmG-rel_CS"/>
</dbReference>
<dbReference type="InterPro" id="IPR040131">
    <property type="entry name" value="MnmG_N"/>
</dbReference>
<dbReference type="InterPro" id="IPR004417">
    <property type="entry name" value="TrmFO"/>
</dbReference>
<dbReference type="NCBIfam" id="TIGR00137">
    <property type="entry name" value="gid_trmFO"/>
    <property type="match status" value="1"/>
</dbReference>
<dbReference type="NCBIfam" id="NF003739">
    <property type="entry name" value="PRK05335.1"/>
    <property type="match status" value="1"/>
</dbReference>
<dbReference type="PANTHER" id="PTHR11806">
    <property type="entry name" value="GLUCOSE INHIBITED DIVISION PROTEIN A"/>
    <property type="match status" value="1"/>
</dbReference>
<dbReference type="PANTHER" id="PTHR11806:SF2">
    <property type="entry name" value="METHYLENETETRAHYDROFOLATE--TRNA-(URACIL-5-)-METHYLTRANSFERASE TRMFO"/>
    <property type="match status" value="1"/>
</dbReference>
<dbReference type="Pfam" id="PF01134">
    <property type="entry name" value="GIDA"/>
    <property type="match status" value="1"/>
</dbReference>
<dbReference type="SUPFAM" id="SSF51905">
    <property type="entry name" value="FAD/NAD(P)-binding domain"/>
    <property type="match status" value="1"/>
</dbReference>
<dbReference type="PROSITE" id="PS01281">
    <property type="entry name" value="GIDA_2"/>
    <property type="match status" value="1"/>
</dbReference>
<organism>
    <name type="scientific">Staphylococcus aureus (strain USA300 / TCH1516)</name>
    <dbReference type="NCBI Taxonomy" id="451516"/>
    <lineage>
        <taxon>Bacteria</taxon>
        <taxon>Bacillati</taxon>
        <taxon>Bacillota</taxon>
        <taxon>Bacilli</taxon>
        <taxon>Bacillales</taxon>
        <taxon>Staphylococcaceae</taxon>
        <taxon>Staphylococcus</taxon>
    </lineage>
</organism>
<feature type="chain" id="PRO_1000084292" description="Methylenetetrahydrofolate--tRNA-(uracil-5-)-methyltransferase TrmFO">
    <location>
        <begin position="1"/>
        <end position="435"/>
    </location>
</feature>
<feature type="binding site" evidence="1">
    <location>
        <begin position="9"/>
        <end position="14"/>
    </location>
    <ligand>
        <name>FAD</name>
        <dbReference type="ChEBI" id="CHEBI:57692"/>
    </ligand>
</feature>
<reference key="1">
    <citation type="journal article" date="2007" name="BMC Microbiol.">
        <title>Subtle genetic changes enhance virulence of methicillin resistant and sensitive Staphylococcus aureus.</title>
        <authorList>
            <person name="Highlander S.K."/>
            <person name="Hulten K.G."/>
            <person name="Qin X."/>
            <person name="Jiang H."/>
            <person name="Yerrapragada S."/>
            <person name="Mason E.O. Jr."/>
            <person name="Shang Y."/>
            <person name="Williams T.M."/>
            <person name="Fortunov R.M."/>
            <person name="Liu Y."/>
            <person name="Igboeli O."/>
            <person name="Petrosino J."/>
            <person name="Tirumalai M."/>
            <person name="Uzman A."/>
            <person name="Fox G.E."/>
            <person name="Cardenas A.M."/>
            <person name="Muzny D.M."/>
            <person name="Hemphill L."/>
            <person name="Ding Y."/>
            <person name="Dugan S."/>
            <person name="Blyth P.R."/>
            <person name="Buhay C.J."/>
            <person name="Dinh H.H."/>
            <person name="Hawes A.C."/>
            <person name="Holder M."/>
            <person name="Kovar C.L."/>
            <person name="Lee S.L."/>
            <person name="Liu W."/>
            <person name="Nazareth L.V."/>
            <person name="Wang Q."/>
            <person name="Zhou J."/>
            <person name="Kaplan S.L."/>
            <person name="Weinstock G.M."/>
        </authorList>
    </citation>
    <scope>NUCLEOTIDE SEQUENCE [LARGE SCALE GENOMIC DNA]</scope>
    <source>
        <strain>USA300 / TCH1516</strain>
    </source>
</reference>
<name>TRMFO_STAAT</name>
<protein>
    <recommendedName>
        <fullName evidence="1">Methylenetetrahydrofolate--tRNA-(uracil-5-)-methyltransferase TrmFO</fullName>
        <ecNumber evidence="1">2.1.1.74</ecNumber>
    </recommendedName>
    <alternativeName>
        <fullName evidence="1">Folate-dependent tRNA (uracil-5-)-methyltransferase</fullName>
    </alternativeName>
    <alternativeName>
        <fullName evidence="1">Folate-dependent tRNA(M-5-U54)-methyltransferase</fullName>
    </alternativeName>
</protein>